<name>HIS5_STAAW</name>
<comment type="function">
    <text evidence="1">IGPS catalyzes the conversion of PRFAR and glutamine to IGP, AICAR and glutamate. The HisH subunit catalyzes the hydrolysis of glutamine to glutamate and ammonia as part of the synthesis of IGP and AICAR. The resulting ammonia molecule is channeled to the active site of HisF.</text>
</comment>
<comment type="catalytic activity">
    <reaction evidence="1">
        <text>5-[(5-phospho-1-deoxy-D-ribulos-1-ylimino)methylamino]-1-(5-phospho-beta-D-ribosyl)imidazole-4-carboxamide + L-glutamine = D-erythro-1-(imidazol-4-yl)glycerol 3-phosphate + 5-amino-1-(5-phospho-beta-D-ribosyl)imidazole-4-carboxamide + L-glutamate + H(+)</text>
        <dbReference type="Rhea" id="RHEA:24793"/>
        <dbReference type="ChEBI" id="CHEBI:15378"/>
        <dbReference type="ChEBI" id="CHEBI:29985"/>
        <dbReference type="ChEBI" id="CHEBI:58278"/>
        <dbReference type="ChEBI" id="CHEBI:58359"/>
        <dbReference type="ChEBI" id="CHEBI:58475"/>
        <dbReference type="ChEBI" id="CHEBI:58525"/>
        <dbReference type="EC" id="4.3.2.10"/>
    </reaction>
</comment>
<comment type="catalytic activity">
    <reaction evidence="1">
        <text>L-glutamine + H2O = L-glutamate + NH4(+)</text>
        <dbReference type="Rhea" id="RHEA:15889"/>
        <dbReference type="ChEBI" id="CHEBI:15377"/>
        <dbReference type="ChEBI" id="CHEBI:28938"/>
        <dbReference type="ChEBI" id="CHEBI:29985"/>
        <dbReference type="ChEBI" id="CHEBI:58359"/>
        <dbReference type="EC" id="3.5.1.2"/>
    </reaction>
</comment>
<comment type="pathway">
    <text evidence="1">Amino-acid biosynthesis; L-histidine biosynthesis; L-histidine from 5-phospho-alpha-D-ribose 1-diphosphate: step 5/9.</text>
</comment>
<comment type="subunit">
    <text evidence="1">Heterodimer of HisH and HisF.</text>
</comment>
<comment type="subcellular location">
    <subcellularLocation>
        <location evidence="1">Cytoplasm</location>
    </subcellularLocation>
</comment>
<gene>
    <name evidence="1" type="primary">hisH</name>
    <name type="ordered locus">MW2594</name>
</gene>
<accession>P64365</accession>
<accession>Q99QW6</accession>
<evidence type="ECO:0000255" key="1">
    <source>
        <dbReference type="HAMAP-Rule" id="MF_00278"/>
    </source>
</evidence>
<proteinExistence type="inferred from homology"/>
<protein>
    <recommendedName>
        <fullName evidence="1">Imidazole glycerol phosphate synthase subunit HisH</fullName>
        <ecNumber evidence="1">4.3.2.10</ecNumber>
    </recommendedName>
    <alternativeName>
        <fullName evidence="1">IGP synthase glutaminase subunit</fullName>
        <ecNumber evidence="1">3.5.1.2</ecNumber>
    </alternativeName>
    <alternativeName>
        <fullName evidence="1">IGP synthase subunit HisH</fullName>
    </alternativeName>
    <alternativeName>
        <fullName evidence="1">ImGP synthase subunit HisH</fullName>
        <shortName evidence="1">IGPS subunit HisH</shortName>
    </alternativeName>
</protein>
<organism>
    <name type="scientific">Staphylococcus aureus (strain MW2)</name>
    <dbReference type="NCBI Taxonomy" id="196620"/>
    <lineage>
        <taxon>Bacteria</taxon>
        <taxon>Bacillati</taxon>
        <taxon>Bacillota</taxon>
        <taxon>Bacilli</taxon>
        <taxon>Bacillales</taxon>
        <taxon>Staphylococcaceae</taxon>
        <taxon>Staphylococcus</taxon>
    </lineage>
</organism>
<feature type="chain" id="PRO_0000152427" description="Imidazole glycerol phosphate synthase subunit HisH">
    <location>
        <begin position="1"/>
        <end position="192"/>
    </location>
</feature>
<feature type="domain" description="Glutamine amidotransferase type-1" evidence="1">
    <location>
        <begin position="1"/>
        <end position="192"/>
    </location>
</feature>
<feature type="active site" description="Nucleophile" evidence="1">
    <location>
        <position position="77"/>
    </location>
</feature>
<feature type="active site" evidence="1">
    <location>
        <position position="169"/>
    </location>
</feature>
<feature type="active site" evidence="1">
    <location>
        <position position="171"/>
    </location>
</feature>
<reference key="1">
    <citation type="journal article" date="2002" name="Lancet">
        <title>Genome and virulence determinants of high virulence community-acquired MRSA.</title>
        <authorList>
            <person name="Baba T."/>
            <person name="Takeuchi F."/>
            <person name="Kuroda M."/>
            <person name="Yuzawa H."/>
            <person name="Aoki K."/>
            <person name="Oguchi A."/>
            <person name="Nagai Y."/>
            <person name="Iwama N."/>
            <person name="Asano K."/>
            <person name="Naimi T."/>
            <person name="Kuroda H."/>
            <person name="Cui L."/>
            <person name="Yamamoto K."/>
            <person name="Hiramatsu K."/>
        </authorList>
    </citation>
    <scope>NUCLEOTIDE SEQUENCE [LARGE SCALE GENOMIC DNA]</scope>
    <source>
        <strain>MW2</strain>
    </source>
</reference>
<sequence>MIVIVDYGLGNISNVKRAIEHLGYEVVVSNTSKIIDQAETIILPGVGHFKDAMSEIKRLNLNAILAKNTDKKMIGICLGMQLMYEHSDEGDASGLGFIPGNISRIQTEYPVPHLGWNNLVSKHPMLNQDVYFVHSYQAPMSENVIAYAQYGADIPAIVQFNNYIGIQFHPEKSGTYGLQILRQAIQGGFIND</sequence>
<dbReference type="EC" id="4.3.2.10" evidence="1"/>
<dbReference type="EC" id="3.5.1.2" evidence="1"/>
<dbReference type="EMBL" id="BA000033">
    <property type="protein sequence ID" value="BAB96459.1"/>
    <property type="molecule type" value="Genomic_DNA"/>
</dbReference>
<dbReference type="RefSeq" id="WP_000635623.1">
    <property type="nucleotide sequence ID" value="NC_003923.1"/>
</dbReference>
<dbReference type="SMR" id="P64365"/>
<dbReference type="KEGG" id="sam:MW2594"/>
<dbReference type="HOGENOM" id="CLU_071837_2_2_9"/>
<dbReference type="UniPathway" id="UPA00031">
    <property type="reaction ID" value="UER00010"/>
</dbReference>
<dbReference type="GO" id="GO:0005737">
    <property type="term" value="C:cytoplasm"/>
    <property type="evidence" value="ECO:0007669"/>
    <property type="project" value="UniProtKB-SubCell"/>
</dbReference>
<dbReference type="GO" id="GO:0004359">
    <property type="term" value="F:glutaminase activity"/>
    <property type="evidence" value="ECO:0007669"/>
    <property type="project" value="UniProtKB-EC"/>
</dbReference>
<dbReference type="GO" id="GO:0000107">
    <property type="term" value="F:imidazoleglycerol-phosphate synthase activity"/>
    <property type="evidence" value="ECO:0007669"/>
    <property type="project" value="UniProtKB-UniRule"/>
</dbReference>
<dbReference type="GO" id="GO:0016829">
    <property type="term" value="F:lyase activity"/>
    <property type="evidence" value="ECO:0007669"/>
    <property type="project" value="UniProtKB-KW"/>
</dbReference>
<dbReference type="GO" id="GO:0000105">
    <property type="term" value="P:L-histidine biosynthetic process"/>
    <property type="evidence" value="ECO:0007669"/>
    <property type="project" value="UniProtKB-UniRule"/>
</dbReference>
<dbReference type="CDD" id="cd01748">
    <property type="entry name" value="GATase1_IGP_Synthase"/>
    <property type="match status" value="1"/>
</dbReference>
<dbReference type="FunFam" id="3.40.50.880:FF:000064">
    <property type="entry name" value="Imidazole glycerol phosphate synthase subunit HisH"/>
    <property type="match status" value="1"/>
</dbReference>
<dbReference type="Gene3D" id="3.40.50.880">
    <property type="match status" value="1"/>
</dbReference>
<dbReference type="HAMAP" id="MF_00278">
    <property type="entry name" value="HisH"/>
    <property type="match status" value="1"/>
</dbReference>
<dbReference type="InterPro" id="IPR029062">
    <property type="entry name" value="Class_I_gatase-like"/>
</dbReference>
<dbReference type="InterPro" id="IPR017926">
    <property type="entry name" value="GATASE"/>
</dbReference>
<dbReference type="InterPro" id="IPR010139">
    <property type="entry name" value="Imidazole-glycPsynth_HisH"/>
</dbReference>
<dbReference type="NCBIfam" id="TIGR01855">
    <property type="entry name" value="IMP_synth_hisH"/>
    <property type="match status" value="1"/>
</dbReference>
<dbReference type="PANTHER" id="PTHR42701">
    <property type="entry name" value="IMIDAZOLE GLYCEROL PHOSPHATE SYNTHASE SUBUNIT HISH"/>
    <property type="match status" value="1"/>
</dbReference>
<dbReference type="PANTHER" id="PTHR42701:SF1">
    <property type="entry name" value="IMIDAZOLE GLYCEROL PHOSPHATE SYNTHASE SUBUNIT HISH"/>
    <property type="match status" value="1"/>
</dbReference>
<dbReference type="Pfam" id="PF00117">
    <property type="entry name" value="GATase"/>
    <property type="match status" value="1"/>
</dbReference>
<dbReference type="PIRSF" id="PIRSF000495">
    <property type="entry name" value="Amidotransf_hisH"/>
    <property type="match status" value="1"/>
</dbReference>
<dbReference type="SUPFAM" id="SSF52317">
    <property type="entry name" value="Class I glutamine amidotransferase-like"/>
    <property type="match status" value="1"/>
</dbReference>
<dbReference type="PROSITE" id="PS51273">
    <property type="entry name" value="GATASE_TYPE_1"/>
    <property type="match status" value="1"/>
</dbReference>
<keyword id="KW-0028">Amino-acid biosynthesis</keyword>
<keyword id="KW-0963">Cytoplasm</keyword>
<keyword id="KW-0315">Glutamine amidotransferase</keyword>
<keyword id="KW-0368">Histidine biosynthesis</keyword>
<keyword id="KW-0378">Hydrolase</keyword>
<keyword id="KW-0456">Lyase</keyword>